<reference key="1">
    <citation type="journal article" date="2006" name="J. Bacteriol.">
        <title>Genome sequence of Aeromonas hydrophila ATCC 7966T: jack of all trades.</title>
        <authorList>
            <person name="Seshadri R."/>
            <person name="Joseph S.W."/>
            <person name="Chopra A.K."/>
            <person name="Sha J."/>
            <person name="Shaw J."/>
            <person name="Graf J."/>
            <person name="Haft D.H."/>
            <person name="Wu M."/>
            <person name="Ren Q."/>
            <person name="Rosovitz M.J."/>
            <person name="Madupu R."/>
            <person name="Tallon L."/>
            <person name="Kim M."/>
            <person name="Jin S."/>
            <person name="Vuong H."/>
            <person name="Stine O.C."/>
            <person name="Ali A."/>
            <person name="Horneman A.J."/>
            <person name="Heidelberg J.F."/>
        </authorList>
    </citation>
    <scope>NUCLEOTIDE SEQUENCE [LARGE SCALE GENOMIC DNA]</scope>
    <source>
        <strain>ATCC 7966 / DSM 30187 / BCRC 13018 / CCUG 14551 / JCM 1027 / KCTC 2358 / NCIMB 9240 / NCTC 8049</strain>
    </source>
</reference>
<protein>
    <recommendedName>
        <fullName evidence="1">Large ribosomal subunit protein uL16</fullName>
    </recommendedName>
    <alternativeName>
        <fullName evidence="3">50S ribosomal protein L16</fullName>
    </alternativeName>
</protein>
<name>RL16_AERHH</name>
<dbReference type="EMBL" id="CP000462">
    <property type="protein sequence ID" value="ABK37882.1"/>
    <property type="molecule type" value="Genomic_DNA"/>
</dbReference>
<dbReference type="RefSeq" id="WP_005307963.1">
    <property type="nucleotide sequence ID" value="NC_008570.1"/>
</dbReference>
<dbReference type="RefSeq" id="YP_854848.1">
    <property type="nucleotide sequence ID" value="NC_008570.1"/>
</dbReference>
<dbReference type="SMR" id="A0KF28"/>
<dbReference type="STRING" id="380703.AHA_0316"/>
<dbReference type="EnsemblBacteria" id="ABK37882">
    <property type="protein sequence ID" value="ABK37882"/>
    <property type="gene ID" value="AHA_0316"/>
</dbReference>
<dbReference type="GeneID" id="97221809"/>
<dbReference type="KEGG" id="aha:AHA_0316"/>
<dbReference type="PATRIC" id="fig|380703.7.peg.305"/>
<dbReference type="eggNOG" id="COG0197">
    <property type="taxonomic scope" value="Bacteria"/>
</dbReference>
<dbReference type="HOGENOM" id="CLU_078858_2_1_6"/>
<dbReference type="OrthoDB" id="9802589at2"/>
<dbReference type="PRO" id="PR:A0KF28"/>
<dbReference type="Proteomes" id="UP000000756">
    <property type="component" value="Chromosome"/>
</dbReference>
<dbReference type="GO" id="GO:0022625">
    <property type="term" value="C:cytosolic large ribosomal subunit"/>
    <property type="evidence" value="ECO:0007669"/>
    <property type="project" value="TreeGrafter"/>
</dbReference>
<dbReference type="GO" id="GO:0019843">
    <property type="term" value="F:rRNA binding"/>
    <property type="evidence" value="ECO:0007669"/>
    <property type="project" value="UniProtKB-UniRule"/>
</dbReference>
<dbReference type="GO" id="GO:0003735">
    <property type="term" value="F:structural constituent of ribosome"/>
    <property type="evidence" value="ECO:0007669"/>
    <property type="project" value="InterPro"/>
</dbReference>
<dbReference type="GO" id="GO:0000049">
    <property type="term" value="F:tRNA binding"/>
    <property type="evidence" value="ECO:0007669"/>
    <property type="project" value="UniProtKB-KW"/>
</dbReference>
<dbReference type="GO" id="GO:0006412">
    <property type="term" value="P:translation"/>
    <property type="evidence" value="ECO:0007669"/>
    <property type="project" value="UniProtKB-UniRule"/>
</dbReference>
<dbReference type="CDD" id="cd01433">
    <property type="entry name" value="Ribosomal_L16_L10e"/>
    <property type="match status" value="1"/>
</dbReference>
<dbReference type="FunFam" id="3.90.1170.10:FF:000001">
    <property type="entry name" value="50S ribosomal protein L16"/>
    <property type="match status" value="1"/>
</dbReference>
<dbReference type="Gene3D" id="3.90.1170.10">
    <property type="entry name" value="Ribosomal protein L10e/L16"/>
    <property type="match status" value="1"/>
</dbReference>
<dbReference type="HAMAP" id="MF_01342">
    <property type="entry name" value="Ribosomal_uL16"/>
    <property type="match status" value="1"/>
</dbReference>
<dbReference type="InterPro" id="IPR047873">
    <property type="entry name" value="Ribosomal_uL16"/>
</dbReference>
<dbReference type="InterPro" id="IPR000114">
    <property type="entry name" value="Ribosomal_uL16_bact-type"/>
</dbReference>
<dbReference type="InterPro" id="IPR020798">
    <property type="entry name" value="Ribosomal_uL16_CS"/>
</dbReference>
<dbReference type="InterPro" id="IPR016180">
    <property type="entry name" value="Ribosomal_uL16_dom"/>
</dbReference>
<dbReference type="InterPro" id="IPR036920">
    <property type="entry name" value="Ribosomal_uL16_sf"/>
</dbReference>
<dbReference type="NCBIfam" id="TIGR01164">
    <property type="entry name" value="rplP_bact"/>
    <property type="match status" value="1"/>
</dbReference>
<dbReference type="PANTHER" id="PTHR12220">
    <property type="entry name" value="50S/60S RIBOSOMAL PROTEIN L16"/>
    <property type="match status" value="1"/>
</dbReference>
<dbReference type="PANTHER" id="PTHR12220:SF13">
    <property type="entry name" value="LARGE RIBOSOMAL SUBUNIT PROTEIN UL16M"/>
    <property type="match status" value="1"/>
</dbReference>
<dbReference type="Pfam" id="PF00252">
    <property type="entry name" value="Ribosomal_L16"/>
    <property type="match status" value="1"/>
</dbReference>
<dbReference type="PRINTS" id="PR00060">
    <property type="entry name" value="RIBOSOMALL16"/>
</dbReference>
<dbReference type="SUPFAM" id="SSF54686">
    <property type="entry name" value="Ribosomal protein L16p/L10e"/>
    <property type="match status" value="1"/>
</dbReference>
<dbReference type="PROSITE" id="PS00586">
    <property type="entry name" value="RIBOSOMAL_L16_1"/>
    <property type="match status" value="1"/>
</dbReference>
<dbReference type="PROSITE" id="PS00701">
    <property type="entry name" value="RIBOSOMAL_L16_2"/>
    <property type="match status" value="1"/>
</dbReference>
<gene>
    <name evidence="1" type="primary">rplP</name>
    <name type="ordered locus">AHA_0316</name>
</gene>
<organism>
    <name type="scientific">Aeromonas hydrophila subsp. hydrophila (strain ATCC 7966 / DSM 30187 / BCRC 13018 / CCUG 14551 / JCM 1027 / KCTC 2358 / NCIMB 9240 / NCTC 8049)</name>
    <dbReference type="NCBI Taxonomy" id="380703"/>
    <lineage>
        <taxon>Bacteria</taxon>
        <taxon>Pseudomonadati</taxon>
        <taxon>Pseudomonadota</taxon>
        <taxon>Gammaproteobacteria</taxon>
        <taxon>Aeromonadales</taxon>
        <taxon>Aeromonadaceae</taxon>
        <taxon>Aeromonas</taxon>
    </lineage>
</organism>
<proteinExistence type="inferred from homology"/>
<comment type="function">
    <text evidence="1">Binds 23S rRNA and is also seen to make contacts with the A and possibly P site tRNAs.</text>
</comment>
<comment type="subunit">
    <text evidence="1">Part of the 50S ribosomal subunit.</text>
</comment>
<comment type="similarity">
    <text evidence="1">Belongs to the universal ribosomal protein uL16 family.</text>
</comment>
<feature type="chain" id="PRO_1000054572" description="Large ribosomal subunit protein uL16">
    <location>
        <begin position="1"/>
        <end position="137"/>
    </location>
</feature>
<feature type="region of interest" description="Disordered" evidence="2">
    <location>
        <begin position="1"/>
        <end position="24"/>
    </location>
</feature>
<feature type="compositionally biased region" description="Basic residues" evidence="2">
    <location>
        <begin position="1"/>
        <end position="17"/>
    </location>
</feature>
<sequence length="137" mass="15382">MLQPKRTKFRKTHKGRNRGLANSGNEVSFGTFGLKATSRGQLTARQIEAARRAMTRHVKRQGKIWIRVFPDKPITEKPLEVRMGKGKGNVEYWVCPIQPGKVLYEMDGVPEALAREAFALAAAKLSVQTTFVIKTVM</sequence>
<accession>A0KF28</accession>
<evidence type="ECO:0000255" key="1">
    <source>
        <dbReference type="HAMAP-Rule" id="MF_01342"/>
    </source>
</evidence>
<evidence type="ECO:0000256" key="2">
    <source>
        <dbReference type="SAM" id="MobiDB-lite"/>
    </source>
</evidence>
<evidence type="ECO:0000305" key="3"/>
<keyword id="KW-1185">Reference proteome</keyword>
<keyword id="KW-0687">Ribonucleoprotein</keyword>
<keyword id="KW-0689">Ribosomal protein</keyword>
<keyword id="KW-0694">RNA-binding</keyword>
<keyword id="KW-0699">rRNA-binding</keyword>
<keyword id="KW-0820">tRNA-binding</keyword>